<keyword id="KW-0210">Decarboxylase</keyword>
<keyword id="KW-0456">Lyase</keyword>
<keyword id="KW-0665">Pyrimidine biosynthesis</keyword>
<evidence type="ECO:0000255" key="1">
    <source>
        <dbReference type="HAMAP-Rule" id="MF_01200"/>
    </source>
</evidence>
<gene>
    <name evidence="1" type="primary">pyrF</name>
    <name type="ordered locus">PLES_21881</name>
</gene>
<accession>B7V800</accession>
<proteinExistence type="inferred from homology"/>
<comment type="function">
    <text evidence="1">Catalyzes the decarboxylation of orotidine 5'-monophosphate (OMP) to uridine 5'-monophosphate (UMP).</text>
</comment>
<comment type="catalytic activity">
    <reaction evidence="1">
        <text>orotidine 5'-phosphate + H(+) = UMP + CO2</text>
        <dbReference type="Rhea" id="RHEA:11596"/>
        <dbReference type="ChEBI" id="CHEBI:15378"/>
        <dbReference type="ChEBI" id="CHEBI:16526"/>
        <dbReference type="ChEBI" id="CHEBI:57538"/>
        <dbReference type="ChEBI" id="CHEBI:57865"/>
        <dbReference type="EC" id="4.1.1.23"/>
    </reaction>
</comment>
<comment type="pathway">
    <text evidence="1">Pyrimidine metabolism; UMP biosynthesis via de novo pathway; UMP from orotate: step 2/2.</text>
</comment>
<comment type="subunit">
    <text evidence="1">Homodimer.</text>
</comment>
<comment type="similarity">
    <text evidence="1">Belongs to the OMP decarboxylase family. Type 1 subfamily.</text>
</comment>
<sequence>MSACQSPIIVALDFPTREAALALADQLDPKLCRVKVGKELFTSCAAGIVETLRGKGFEVFLDLKFHDIPNTTAMAVKAAAEMGVWMVNVHCSGGLRMMAACRETLEAFSGPRPLLIGVTVLTSMEREDLAGIGLDIEPQEQVLRLAALAQKAGMDGLVCSAQEAPALKAAHPGLQLVTPGIRPAGSAQDDQRRILTPRQALDAGSDYLVIGRPISQAADPAKALAAIVAELG</sequence>
<protein>
    <recommendedName>
        <fullName evidence="1">Orotidine 5'-phosphate decarboxylase</fullName>
        <ecNumber evidence="1">4.1.1.23</ecNumber>
    </recommendedName>
    <alternativeName>
        <fullName evidence="1">OMP decarboxylase</fullName>
        <shortName evidence="1">OMPDCase</shortName>
        <shortName evidence="1">OMPdecase</shortName>
    </alternativeName>
</protein>
<dbReference type="EC" id="4.1.1.23" evidence="1"/>
<dbReference type="EMBL" id="FM209186">
    <property type="protein sequence ID" value="CAW26915.1"/>
    <property type="molecule type" value="Genomic_DNA"/>
</dbReference>
<dbReference type="RefSeq" id="WP_003090975.1">
    <property type="nucleotide sequence ID" value="NC_011770.1"/>
</dbReference>
<dbReference type="SMR" id="B7V800"/>
<dbReference type="KEGG" id="pag:PLES_21881"/>
<dbReference type="HOGENOM" id="CLU_067069_0_0_6"/>
<dbReference type="UniPathway" id="UPA00070">
    <property type="reaction ID" value="UER00120"/>
</dbReference>
<dbReference type="GO" id="GO:0005829">
    <property type="term" value="C:cytosol"/>
    <property type="evidence" value="ECO:0007669"/>
    <property type="project" value="TreeGrafter"/>
</dbReference>
<dbReference type="GO" id="GO:0004590">
    <property type="term" value="F:orotidine-5'-phosphate decarboxylase activity"/>
    <property type="evidence" value="ECO:0007669"/>
    <property type="project" value="UniProtKB-UniRule"/>
</dbReference>
<dbReference type="GO" id="GO:0006207">
    <property type="term" value="P:'de novo' pyrimidine nucleobase biosynthetic process"/>
    <property type="evidence" value="ECO:0007669"/>
    <property type="project" value="InterPro"/>
</dbReference>
<dbReference type="GO" id="GO:0044205">
    <property type="term" value="P:'de novo' UMP biosynthetic process"/>
    <property type="evidence" value="ECO:0007669"/>
    <property type="project" value="UniProtKB-UniRule"/>
</dbReference>
<dbReference type="CDD" id="cd04725">
    <property type="entry name" value="OMP_decarboxylase_like"/>
    <property type="match status" value="1"/>
</dbReference>
<dbReference type="FunFam" id="3.20.20.70:FF:000015">
    <property type="entry name" value="Orotidine 5'-phosphate decarboxylase"/>
    <property type="match status" value="1"/>
</dbReference>
<dbReference type="Gene3D" id="3.20.20.70">
    <property type="entry name" value="Aldolase class I"/>
    <property type="match status" value="1"/>
</dbReference>
<dbReference type="HAMAP" id="MF_01200_B">
    <property type="entry name" value="OMPdecase_type1_B"/>
    <property type="match status" value="1"/>
</dbReference>
<dbReference type="InterPro" id="IPR013785">
    <property type="entry name" value="Aldolase_TIM"/>
</dbReference>
<dbReference type="InterPro" id="IPR014732">
    <property type="entry name" value="OMPdecase"/>
</dbReference>
<dbReference type="InterPro" id="IPR018089">
    <property type="entry name" value="OMPdecase_AS"/>
</dbReference>
<dbReference type="InterPro" id="IPR047596">
    <property type="entry name" value="OMPdecase_bac"/>
</dbReference>
<dbReference type="InterPro" id="IPR001754">
    <property type="entry name" value="OMPdeCOase_dom"/>
</dbReference>
<dbReference type="InterPro" id="IPR011060">
    <property type="entry name" value="RibuloseP-bd_barrel"/>
</dbReference>
<dbReference type="NCBIfam" id="NF001273">
    <property type="entry name" value="PRK00230.1"/>
    <property type="match status" value="1"/>
</dbReference>
<dbReference type="NCBIfam" id="TIGR01740">
    <property type="entry name" value="pyrF"/>
    <property type="match status" value="1"/>
</dbReference>
<dbReference type="PANTHER" id="PTHR32119">
    <property type="entry name" value="OROTIDINE 5'-PHOSPHATE DECARBOXYLASE"/>
    <property type="match status" value="1"/>
</dbReference>
<dbReference type="PANTHER" id="PTHR32119:SF2">
    <property type="entry name" value="OROTIDINE 5'-PHOSPHATE DECARBOXYLASE"/>
    <property type="match status" value="1"/>
</dbReference>
<dbReference type="Pfam" id="PF00215">
    <property type="entry name" value="OMPdecase"/>
    <property type="match status" value="1"/>
</dbReference>
<dbReference type="SMART" id="SM00934">
    <property type="entry name" value="OMPdecase"/>
    <property type="match status" value="1"/>
</dbReference>
<dbReference type="SUPFAM" id="SSF51366">
    <property type="entry name" value="Ribulose-phoshate binding barrel"/>
    <property type="match status" value="1"/>
</dbReference>
<dbReference type="PROSITE" id="PS00156">
    <property type="entry name" value="OMPDECASE"/>
    <property type="match status" value="1"/>
</dbReference>
<feature type="chain" id="PRO_1000138548" description="Orotidine 5'-phosphate decarboxylase">
    <location>
        <begin position="1"/>
        <end position="232"/>
    </location>
</feature>
<feature type="active site" description="Proton donor" evidence="1">
    <location>
        <position position="64"/>
    </location>
</feature>
<feature type="binding site" evidence="1">
    <location>
        <position position="13"/>
    </location>
    <ligand>
        <name>substrate</name>
    </ligand>
</feature>
<feature type="binding site" evidence="1">
    <location>
        <position position="35"/>
    </location>
    <ligand>
        <name>substrate</name>
    </ligand>
</feature>
<feature type="binding site" evidence="1">
    <location>
        <begin position="62"/>
        <end position="71"/>
    </location>
    <ligand>
        <name>substrate</name>
    </ligand>
</feature>
<feature type="binding site" evidence="1">
    <location>
        <position position="122"/>
    </location>
    <ligand>
        <name>substrate</name>
    </ligand>
</feature>
<feature type="binding site" evidence="1">
    <location>
        <position position="182"/>
    </location>
    <ligand>
        <name>substrate</name>
    </ligand>
</feature>
<feature type="binding site" evidence="1">
    <location>
        <position position="191"/>
    </location>
    <ligand>
        <name>substrate</name>
    </ligand>
</feature>
<feature type="binding site" evidence="1">
    <location>
        <position position="211"/>
    </location>
    <ligand>
        <name>substrate</name>
    </ligand>
</feature>
<feature type="binding site" evidence="1">
    <location>
        <position position="212"/>
    </location>
    <ligand>
        <name>substrate</name>
    </ligand>
</feature>
<name>PYRF_PSEA8</name>
<organism>
    <name type="scientific">Pseudomonas aeruginosa (strain LESB58)</name>
    <dbReference type="NCBI Taxonomy" id="557722"/>
    <lineage>
        <taxon>Bacteria</taxon>
        <taxon>Pseudomonadati</taxon>
        <taxon>Pseudomonadota</taxon>
        <taxon>Gammaproteobacteria</taxon>
        <taxon>Pseudomonadales</taxon>
        <taxon>Pseudomonadaceae</taxon>
        <taxon>Pseudomonas</taxon>
    </lineage>
</organism>
<reference key="1">
    <citation type="journal article" date="2009" name="Genome Res.">
        <title>Newly introduced genomic prophage islands are critical determinants of in vivo competitiveness in the Liverpool epidemic strain of Pseudomonas aeruginosa.</title>
        <authorList>
            <person name="Winstanley C."/>
            <person name="Langille M.G.I."/>
            <person name="Fothergill J.L."/>
            <person name="Kukavica-Ibrulj I."/>
            <person name="Paradis-Bleau C."/>
            <person name="Sanschagrin F."/>
            <person name="Thomson N.R."/>
            <person name="Winsor G.L."/>
            <person name="Quail M.A."/>
            <person name="Lennard N."/>
            <person name="Bignell A."/>
            <person name="Clarke L."/>
            <person name="Seeger K."/>
            <person name="Saunders D."/>
            <person name="Harris D."/>
            <person name="Parkhill J."/>
            <person name="Hancock R.E.W."/>
            <person name="Brinkman F.S.L."/>
            <person name="Levesque R.C."/>
        </authorList>
    </citation>
    <scope>NUCLEOTIDE SEQUENCE [LARGE SCALE GENOMIC DNA]</scope>
    <source>
        <strain>LESB58</strain>
    </source>
</reference>